<accession>A8F7D5</accession>
<feature type="chain" id="PRO_1000068797" description="Formate--tetrahydrofolate ligase">
    <location>
        <begin position="1"/>
        <end position="553"/>
    </location>
</feature>
<feature type="binding site" evidence="1">
    <location>
        <begin position="64"/>
        <end position="71"/>
    </location>
    <ligand>
        <name>ATP</name>
        <dbReference type="ChEBI" id="CHEBI:30616"/>
    </ligand>
</feature>
<name>FTHS_PSELT</name>
<dbReference type="EC" id="6.3.4.3" evidence="1"/>
<dbReference type="EMBL" id="CP000812">
    <property type="protein sequence ID" value="ABV34069.1"/>
    <property type="molecule type" value="Genomic_DNA"/>
</dbReference>
<dbReference type="RefSeq" id="WP_012003545.1">
    <property type="nucleotide sequence ID" value="NC_009828.1"/>
</dbReference>
<dbReference type="SMR" id="A8F7D5"/>
<dbReference type="STRING" id="416591.Tlet_1513"/>
<dbReference type="KEGG" id="tle:Tlet_1513"/>
<dbReference type="eggNOG" id="COG2759">
    <property type="taxonomic scope" value="Bacteria"/>
</dbReference>
<dbReference type="HOGENOM" id="CLU_003601_3_3_0"/>
<dbReference type="OrthoDB" id="9761733at2"/>
<dbReference type="UniPathway" id="UPA00193"/>
<dbReference type="Proteomes" id="UP000002016">
    <property type="component" value="Chromosome"/>
</dbReference>
<dbReference type="GO" id="GO:0005524">
    <property type="term" value="F:ATP binding"/>
    <property type="evidence" value="ECO:0007669"/>
    <property type="project" value="UniProtKB-UniRule"/>
</dbReference>
<dbReference type="GO" id="GO:0004329">
    <property type="term" value="F:formate-tetrahydrofolate ligase activity"/>
    <property type="evidence" value="ECO:0007669"/>
    <property type="project" value="UniProtKB-UniRule"/>
</dbReference>
<dbReference type="GO" id="GO:0035999">
    <property type="term" value="P:tetrahydrofolate interconversion"/>
    <property type="evidence" value="ECO:0007669"/>
    <property type="project" value="UniProtKB-UniRule"/>
</dbReference>
<dbReference type="CDD" id="cd00477">
    <property type="entry name" value="FTHFS"/>
    <property type="match status" value="1"/>
</dbReference>
<dbReference type="FunFam" id="3.30.1510.10:FF:000001">
    <property type="entry name" value="Formate--tetrahydrofolate ligase"/>
    <property type="match status" value="1"/>
</dbReference>
<dbReference type="FunFam" id="3.10.410.10:FF:000001">
    <property type="entry name" value="Putative formate--tetrahydrofolate ligase"/>
    <property type="match status" value="1"/>
</dbReference>
<dbReference type="Gene3D" id="3.30.1510.10">
    <property type="entry name" value="Domain 2, N(10)-formyltetrahydrofolate synthetase"/>
    <property type="match status" value="1"/>
</dbReference>
<dbReference type="Gene3D" id="3.10.410.10">
    <property type="entry name" value="Formyltetrahydrofolate synthetase, domain 3"/>
    <property type="match status" value="1"/>
</dbReference>
<dbReference type="Gene3D" id="3.40.50.300">
    <property type="entry name" value="P-loop containing nucleotide triphosphate hydrolases"/>
    <property type="match status" value="1"/>
</dbReference>
<dbReference type="HAMAP" id="MF_01543">
    <property type="entry name" value="FTHFS"/>
    <property type="match status" value="1"/>
</dbReference>
<dbReference type="InterPro" id="IPR000559">
    <property type="entry name" value="Formate_THF_ligase"/>
</dbReference>
<dbReference type="InterPro" id="IPR020628">
    <property type="entry name" value="Formate_THF_ligase_CS"/>
</dbReference>
<dbReference type="InterPro" id="IPR027417">
    <property type="entry name" value="P-loop_NTPase"/>
</dbReference>
<dbReference type="NCBIfam" id="NF010030">
    <property type="entry name" value="PRK13505.1"/>
    <property type="match status" value="1"/>
</dbReference>
<dbReference type="Pfam" id="PF01268">
    <property type="entry name" value="FTHFS"/>
    <property type="match status" value="1"/>
</dbReference>
<dbReference type="SUPFAM" id="SSF52540">
    <property type="entry name" value="P-loop containing nucleoside triphosphate hydrolases"/>
    <property type="match status" value="1"/>
</dbReference>
<dbReference type="PROSITE" id="PS00721">
    <property type="entry name" value="FTHFS_1"/>
    <property type="match status" value="1"/>
</dbReference>
<dbReference type="PROSITE" id="PS00722">
    <property type="entry name" value="FTHFS_2"/>
    <property type="match status" value="1"/>
</dbReference>
<evidence type="ECO:0000255" key="1">
    <source>
        <dbReference type="HAMAP-Rule" id="MF_01543"/>
    </source>
</evidence>
<reference key="1">
    <citation type="submission" date="2007-08" db="EMBL/GenBank/DDBJ databases">
        <title>Complete sequence of Thermotoga lettingae TMO.</title>
        <authorList>
            <consortium name="US DOE Joint Genome Institute"/>
            <person name="Copeland A."/>
            <person name="Lucas S."/>
            <person name="Lapidus A."/>
            <person name="Barry K."/>
            <person name="Glavina del Rio T."/>
            <person name="Dalin E."/>
            <person name="Tice H."/>
            <person name="Pitluck S."/>
            <person name="Foster B."/>
            <person name="Bruce D."/>
            <person name="Schmutz J."/>
            <person name="Larimer F."/>
            <person name="Land M."/>
            <person name="Hauser L."/>
            <person name="Kyrpides N."/>
            <person name="Mikhailova N."/>
            <person name="Nelson K."/>
            <person name="Gogarten J.P."/>
            <person name="Noll K."/>
            <person name="Richardson P."/>
        </authorList>
    </citation>
    <scope>NUCLEOTIDE SEQUENCE [LARGE SCALE GENOMIC DNA]</scope>
    <source>
        <strain>ATCC BAA-301 / DSM 14385 / NBRC 107922 / TMO</strain>
    </source>
</reference>
<sequence>MLSDIEIARSAKLEPVMNIAKNLSIPGDFLNSYGKFMAKISHSFLKNLNIRKGKLILVTAMTPTPAGEGKTTTSIGLSMALNKIGHRSIVTLREPSLGPVFGIKGGAAGGGYSQVLPMEDINLHFTGDIHAVGTAHNLISAVIDSHIRFGNDLDIDLTKITWPRAIDMNDRALRNIVIALGGHANGYPREDGFVITAASEIMAILCLSKDLQDLKNRVGNIVIGWSKNGKPVTVHELGIEGAIAVILKDAINPNLVQTIENTPAFIHGGPFANIAHGTNSIIATKMALGLSDYVVTESGFGSDLGAEKFFDFVSPAADLKPSVAVIVATVRAIKYHGGVPLKDLENENLEAIKKGIENLKIHIENVKKFNVPVVVALNRFATDTERELDLVVNTVEKLGTKISLNEAFAKGSEGAIDLAKKVIEVADESKFSPIYKWDSPVEEKIKILATEIYRAKDVSFSKEAITSLKQIEKAGLSNLPVIVAKTQYSISDDPSKLGAPDGYVFNVRNFKLSSGAGFIVAISGEIMLMPGLGKKPNAVNIDIDEKGNITGLF</sequence>
<protein>
    <recommendedName>
        <fullName evidence="1">Formate--tetrahydrofolate ligase</fullName>
        <ecNumber evidence="1">6.3.4.3</ecNumber>
    </recommendedName>
    <alternativeName>
        <fullName evidence="1">Formyltetrahydrofolate synthetase</fullName>
        <shortName evidence="1">FHS</shortName>
        <shortName evidence="1">FTHFS</shortName>
    </alternativeName>
</protein>
<organism>
    <name type="scientific">Pseudothermotoga lettingae (strain ATCC BAA-301 / DSM 14385 / NBRC 107922 / TMO)</name>
    <name type="common">Thermotoga lettingae</name>
    <dbReference type="NCBI Taxonomy" id="416591"/>
    <lineage>
        <taxon>Bacteria</taxon>
        <taxon>Thermotogati</taxon>
        <taxon>Thermotogota</taxon>
        <taxon>Thermotogae</taxon>
        <taxon>Thermotogales</taxon>
        <taxon>Thermotogaceae</taxon>
        <taxon>Pseudothermotoga</taxon>
    </lineage>
</organism>
<keyword id="KW-0067">ATP-binding</keyword>
<keyword id="KW-0436">Ligase</keyword>
<keyword id="KW-0547">Nucleotide-binding</keyword>
<keyword id="KW-0554">One-carbon metabolism</keyword>
<keyword id="KW-1185">Reference proteome</keyword>
<proteinExistence type="inferred from homology"/>
<gene>
    <name evidence="1" type="primary">fhs</name>
    <name type="ordered locus">Tlet_1513</name>
</gene>
<comment type="catalytic activity">
    <reaction evidence="1">
        <text>(6S)-5,6,7,8-tetrahydrofolate + formate + ATP = (6R)-10-formyltetrahydrofolate + ADP + phosphate</text>
        <dbReference type="Rhea" id="RHEA:20221"/>
        <dbReference type="ChEBI" id="CHEBI:15740"/>
        <dbReference type="ChEBI" id="CHEBI:30616"/>
        <dbReference type="ChEBI" id="CHEBI:43474"/>
        <dbReference type="ChEBI" id="CHEBI:57453"/>
        <dbReference type="ChEBI" id="CHEBI:195366"/>
        <dbReference type="ChEBI" id="CHEBI:456216"/>
        <dbReference type="EC" id="6.3.4.3"/>
    </reaction>
</comment>
<comment type="pathway">
    <text evidence="1">One-carbon metabolism; tetrahydrofolate interconversion.</text>
</comment>
<comment type="similarity">
    <text evidence="1">Belongs to the formate--tetrahydrofolate ligase family.</text>
</comment>